<gene>
    <name evidence="1" type="primary">atpA2</name>
    <name type="ordered locus">Patl_4297</name>
</gene>
<dbReference type="EC" id="7.1.2.2" evidence="1"/>
<dbReference type="EMBL" id="CP000388">
    <property type="protein sequence ID" value="ABG42796.1"/>
    <property type="molecule type" value="Genomic_DNA"/>
</dbReference>
<dbReference type="SMR" id="Q15MU2"/>
<dbReference type="STRING" id="342610.Patl_4297"/>
<dbReference type="KEGG" id="pat:Patl_4297"/>
<dbReference type="eggNOG" id="COG0056">
    <property type="taxonomic scope" value="Bacteria"/>
</dbReference>
<dbReference type="HOGENOM" id="CLU_010091_2_1_6"/>
<dbReference type="OrthoDB" id="9803053at2"/>
<dbReference type="Proteomes" id="UP000001981">
    <property type="component" value="Chromosome"/>
</dbReference>
<dbReference type="GO" id="GO:0005886">
    <property type="term" value="C:plasma membrane"/>
    <property type="evidence" value="ECO:0007669"/>
    <property type="project" value="UniProtKB-SubCell"/>
</dbReference>
<dbReference type="GO" id="GO:0045259">
    <property type="term" value="C:proton-transporting ATP synthase complex"/>
    <property type="evidence" value="ECO:0007669"/>
    <property type="project" value="UniProtKB-KW"/>
</dbReference>
<dbReference type="GO" id="GO:0043531">
    <property type="term" value="F:ADP binding"/>
    <property type="evidence" value="ECO:0007669"/>
    <property type="project" value="TreeGrafter"/>
</dbReference>
<dbReference type="GO" id="GO:0005524">
    <property type="term" value="F:ATP binding"/>
    <property type="evidence" value="ECO:0007669"/>
    <property type="project" value="UniProtKB-UniRule"/>
</dbReference>
<dbReference type="GO" id="GO:0046933">
    <property type="term" value="F:proton-transporting ATP synthase activity, rotational mechanism"/>
    <property type="evidence" value="ECO:0007669"/>
    <property type="project" value="UniProtKB-UniRule"/>
</dbReference>
<dbReference type="CDD" id="cd18113">
    <property type="entry name" value="ATP-synt_F1_alpha_C"/>
    <property type="match status" value="1"/>
</dbReference>
<dbReference type="CDD" id="cd18116">
    <property type="entry name" value="ATP-synt_F1_alpha_N"/>
    <property type="match status" value="1"/>
</dbReference>
<dbReference type="CDD" id="cd01132">
    <property type="entry name" value="F1-ATPase_alpha_CD"/>
    <property type="match status" value="1"/>
</dbReference>
<dbReference type="FunFam" id="1.20.150.20:FF:000001">
    <property type="entry name" value="ATP synthase subunit alpha"/>
    <property type="match status" value="1"/>
</dbReference>
<dbReference type="FunFam" id="2.40.30.20:FF:000001">
    <property type="entry name" value="ATP synthase subunit alpha"/>
    <property type="match status" value="1"/>
</dbReference>
<dbReference type="FunFam" id="3.40.50.300:FF:000002">
    <property type="entry name" value="ATP synthase subunit alpha"/>
    <property type="match status" value="1"/>
</dbReference>
<dbReference type="Gene3D" id="2.40.30.20">
    <property type="match status" value="1"/>
</dbReference>
<dbReference type="Gene3D" id="1.20.150.20">
    <property type="entry name" value="ATP synthase alpha/beta chain, C-terminal domain"/>
    <property type="match status" value="1"/>
</dbReference>
<dbReference type="Gene3D" id="3.40.50.300">
    <property type="entry name" value="P-loop containing nucleotide triphosphate hydrolases"/>
    <property type="match status" value="1"/>
</dbReference>
<dbReference type="HAMAP" id="MF_01346">
    <property type="entry name" value="ATP_synth_alpha_bact"/>
    <property type="match status" value="1"/>
</dbReference>
<dbReference type="InterPro" id="IPR023366">
    <property type="entry name" value="ATP_synth_asu-like_sf"/>
</dbReference>
<dbReference type="InterPro" id="IPR000793">
    <property type="entry name" value="ATP_synth_asu_C"/>
</dbReference>
<dbReference type="InterPro" id="IPR038376">
    <property type="entry name" value="ATP_synth_asu_C_sf"/>
</dbReference>
<dbReference type="InterPro" id="IPR033732">
    <property type="entry name" value="ATP_synth_F1_a_nt-bd_dom"/>
</dbReference>
<dbReference type="InterPro" id="IPR005294">
    <property type="entry name" value="ATP_synth_F1_asu"/>
</dbReference>
<dbReference type="InterPro" id="IPR020003">
    <property type="entry name" value="ATPase_a/bsu_AS"/>
</dbReference>
<dbReference type="InterPro" id="IPR004100">
    <property type="entry name" value="ATPase_F1/V1/A1_a/bsu_N"/>
</dbReference>
<dbReference type="InterPro" id="IPR036121">
    <property type="entry name" value="ATPase_F1/V1/A1_a/bsu_N_sf"/>
</dbReference>
<dbReference type="InterPro" id="IPR000194">
    <property type="entry name" value="ATPase_F1/V1/A1_a/bsu_nucl-bd"/>
</dbReference>
<dbReference type="InterPro" id="IPR027417">
    <property type="entry name" value="P-loop_NTPase"/>
</dbReference>
<dbReference type="NCBIfam" id="TIGR00962">
    <property type="entry name" value="atpA"/>
    <property type="match status" value="1"/>
</dbReference>
<dbReference type="NCBIfam" id="NF009884">
    <property type="entry name" value="PRK13343.1"/>
    <property type="match status" value="1"/>
</dbReference>
<dbReference type="PANTHER" id="PTHR48082">
    <property type="entry name" value="ATP SYNTHASE SUBUNIT ALPHA, MITOCHONDRIAL"/>
    <property type="match status" value="1"/>
</dbReference>
<dbReference type="PANTHER" id="PTHR48082:SF2">
    <property type="entry name" value="ATP SYNTHASE SUBUNIT ALPHA, MITOCHONDRIAL"/>
    <property type="match status" value="1"/>
</dbReference>
<dbReference type="Pfam" id="PF00006">
    <property type="entry name" value="ATP-synt_ab"/>
    <property type="match status" value="1"/>
</dbReference>
<dbReference type="Pfam" id="PF00306">
    <property type="entry name" value="ATP-synt_ab_C"/>
    <property type="match status" value="1"/>
</dbReference>
<dbReference type="Pfam" id="PF02874">
    <property type="entry name" value="ATP-synt_ab_N"/>
    <property type="match status" value="1"/>
</dbReference>
<dbReference type="SUPFAM" id="SSF47917">
    <property type="entry name" value="C-terminal domain of alpha and beta subunits of F1 ATP synthase"/>
    <property type="match status" value="1"/>
</dbReference>
<dbReference type="SUPFAM" id="SSF50615">
    <property type="entry name" value="N-terminal domain of alpha and beta subunits of F1 ATP synthase"/>
    <property type="match status" value="1"/>
</dbReference>
<dbReference type="SUPFAM" id="SSF52540">
    <property type="entry name" value="P-loop containing nucleoside triphosphate hydrolases"/>
    <property type="match status" value="1"/>
</dbReference>
<dbReference type="PROSITE" id="PS00152">
    <property type="entry name" value="ATPASE_ALPHA_BETA"/>
    <property type="match status" value="1"/>
</dbReference>
<protein>
    <recommendedName>
        <fullName evidence="1">ATP synthase subunit alpha 2</fullName>
        <ecNumber evidence="1">7.1.2.2</ecNumber>
    </recommendedName>
    <alternativeName>
        <fullName evidence="1">ATP synthase F1 sector subunit alpha 2</fullName>
    </alternativeName>
    <alternativeName>
        <fullName evidence="1">F-ATPase subunit alpha 2</fullName>
    </alternativeName>
</protein>
<feature type="chain" id="PRO_0000339047" description="ATP synthase subunit alpha 2">
    <location>
        <begin position="1"/>
        <end position="513"/>
    </location>
</feature>
<feature type="binding site" evidence="1">
    <location>
        <begin position="169"/>
        <end position="176"/>
    </location>
    <ligand>
        <name>ATP</name>
        <dbReference type="ChEBI" id="CHEBI:30616"/>
    </ligand>
</feature>
<feature type="site" description="Required for activity" evidence="1">
    <location>
        <position position="373"/>
    </location>
</feature>
<evidence type="ECO:0000255" key="1">
    <source>
        <dbReference type="HAMAP-Rule" id="MF_01346"/>
    </source>
</evidence>
<keyword id="KW-0066">ATP synthesis</keyword>
<keyword id="KW-0067">ATP-binding</keyword>
<keyword id="KW-0997">Cell inner membrane</keyword>
<keyword id="KW-1003">Cell membrane</keyword>
<keyword id="KW-0139">CF(1)</keyword>
<keyword id="KW-0375">Hydrogen ion transport</keyword>
<keyword id="KW-0406">Ion transport</keyword>
<keyword id="KW-0472">Membrane</keyword>
<keyword id="KW-0547">Nucleotide-binding</keyword>
<keyword id="KW-1278">Translocase</keyword>
<keyword id="KW-0813">Transport</keyword>
<name>ATPA2_PSEA6</name>
<accession>Q15MU2</accession>
<sequence>MQLNSTEIAELIKQRIEQFEVVSEARNEGTIVGVTDGIIRIHGLADVMQGEMIELPGNRYAIALNLERDSVGAVVMGPYADLQEGAKVTSSGRILEVPVGRGLLGRVVNTLGAPIDGKGAIEADGFEPVEKIAPGVIERQSVDQPIQTGYKSVDAMIPVGRGQRELVIGDRQTGKTALAIDAIINQKDSGVKCVYVAVGQKASTIANVVRKLEEHGAMAHTIVVAASASESAALQYLAPYSGCTMGEYFRDRGEDALIVYDDLSKQAVAYRQISLLLRRPPGREAYPGDVFYLHSRLLERAARVNENYVENFTKGEVKGKTGSLTALPIIETQAGDVSAFVPTNVISITDGQIFLETDLFNSGIRPAVNAGISVSRVGGAAQTKIVKKLGGGIRLALAQYRELAAFSQFASDLDEATRAQLEHGERVMELMKQNQYAPLSVADMSVSLFAVEKGYLKDVELDKILDFEAALHSYMNSEYAELIKTINDTGNFNGEIEATLAEALEKFKATQTW</sequence>
<proteinExistence type="inferred from homology"/>
<comment type="function">
    <text evidence="1">Produces ATP from ADP in the presence of a proton gradient across the membrane. The alpha chain is a regulatory subunit.</text>
</comment>
<comment type="catalytic activity">
    <reaction evidence="1">
        <text>ATP + H2O + 4 H(+)(in) = ADP + phosphate + 5 H(+)(out)</text>
        <dbReference type="Rhea" id="RHEA:57720"/>
        <dbReference type="ChEBI" id="CHEBI:15377"/>
        <dbReference type="ChEBI" id="CHEBI:15378"/>
        <dbReference type="ChEBI" id="CHEBI:30616"/>
        <dbReference type="ChEBI" id="CHEBI:43474"/>
        <dbReference type="ChEBI" id="CHEBI:456216"/>
        <dbReference type="EC" id="7.1.2.2"/>
    </reaction>
</comment>
<comment type="subunit">
    <text evidence="1">F-type ATPases have 2 components, CF(1) - the catalytic core - and CF(0) - the membrane proton channel. CF(1) has five subunits: alpha(3), beta(3), gamma(1), delta(1), epsilon(1). CF(0) has three main subunits: a(1), b(2) and c(9-12). The alpha and beta chains form an alternating ring which encloses part of the gamma chain. CF(1) is attached to CF(0) by a central stalk formed by the gamma and epsilon chains, while a peripheral stalk is formed by the delta and b chains.</text>
</comment>
<comment type="subcellular location">
    <subcellularLocation>
        <location evidence="1">Cell inner membrane</location>
        <topology evidence="1">Peripheral membrane protein</topology>
    </subcellularLocation>
</comment>
<comment type="similarity">
    <text evidence="1">Belongs to the ATPase alpha/beta chains family.</text>
</comment>
<reference key="1">
    <citation type="submission" date="2006-06" db="EMBL/GenBank/DDBJ databases">
        <title>Complete sequence of Pseudoalteromonas atlantica T6c.</title>
        <authorList>
            <consortium name="US DOE Joint Genome Institute"/>
            <person name="Copeland A."/>
            <person name="Lucas S."/>
            <person name="Lapidus A."/>
            <person name="Barry K."/>
            <person name="Detter J.C."/>
            <person name="Glavina del Rio T."/>
            <person name="Hammon N."/>
            <person name="Israni S."/>
            <person name="Dalin E."/>
            <person name="Tice H."/>
            <person name="Pitluck S."/>
            <person name="Saunders E."/>
            <person name="Brettin T."/>
            <person name="Bruce D."/>
            <person name="Han C."/>
            <person name="Tapia R."/>
            <person name="Gilna P."/>
            <person name="Schmutz J."/>
            <person name="Larimer F."/>
            <person name="Land M."/>
            <person name="Hauser L."/>
            <person name="Kyrpides N."/>
            <person name="Kim E."/>
            <person name="Karls A.C."/>
            <person name="Bartlett D."/>
            <person name="Higgins B.P."/>
            <person name="Richardson P."/>
        </authorList>
    </citation>
    <scope>NUCLEOTIDE SEQUENCE [LARGE SCALE GENOMIC DNA]</scope>
    <source>
        <strain>T6c / ATCC BAA-1087</strain>
    </source>
</reference>
<organism>
    <name type="scientific">Pseudoalteromonas atlantica (strain T6c / ATCC BAA-1087)</name>
    <dbReference type="NCBI Taxonomy" id="3042615"/>
    <lineage>
        <taxon>Bacteria</taxon>
        <taxon>Pseudomonadati</taxon>
        <taxon>Pseudomonadota</taxon>
        <taxon>Gammaproteobacteria</taxon>
        <taxon>Alteromonadales</taxon>
        <taxon>Alteromonadaceae</taxon>
        <taxon>Paraglaciecola</taxon>
    </lineage>
</organism>